<gene>
    <name type="ordered locus">CPn_0180</name>
    <name type="ordered locus">CP_0588</name>
    <name type="ordered locus">CPj0180</name>
    <name type="ordered locus">CpB0183</name>
</gene>
<sequence>MASETYPSQILHAQREVRDAYFNQADCHPARANQILEAKKICLLDVYHTNHYSVFTFCVDNYPNLRFTFVSSKNNEMNGLSNPLDNVLVEAMVRRTHARNLLAACKIRNIEVPRVVGLDLRSGILISKLELKQPQFQSLTEDFVNHSTNQEEARVHQKHVLLISLILLCKQAVLESFQEKKRSS</sequence>
<protein>
    <recommendedName>
        <fullName>Uncharacterized protein CPn_0180/CP_0588/CPj0180/CpB0183</fullName>
    </recommendedName>
</protein>
<dbReference type="EMBL" id="AE001363">
    <property type="protein sequence ID" value="AAD18333.1"/>
    <property type="molecule type" value="Genomic_DNA"/>
</dbReference>
<dbReference type="EMBL" id="AE002161">
    <property type="protein sequence ID" value="AAF38406.1"/>
    <property type="molecule type" value="Genomic_DNA"/>
</dbReference>
<dbReference type="EMBL" id="BA000008">
    <property type="protein sequence ID" value="BAA98390.1"/>
    <property type="molecule type" value="Genomic_DNA"/>
</dbReference>
<dbReference type="EMBL" id="AE009440">
    <property type="protein sequence ID" value="AAP98116.1"/>
    <property type="molecule type" value="Genomic_DNA"/>
</dbReference>
<dbReference type="PIR" id="A81561">
    <property type="entry name" value="A81561"/>
</dbReference>
<dbReference type="PIR" id="C72110">
    <property type="entry name" value="C72110"/>
</dbReference>
<dbReference type="PIR" id="D86513">
    <property type="entry name" value="D86513"/>
</dbReference>
<dbReference type="RefSeq" id="NP_224389.1">
    <property type="nucleotide sequence ID" value="NC_000922.1"/>
</dbReference>
<dbReference type="RefSeq" id="WP_010882831.1">
    <property type="nucleotide sequence ID" value="NZ_LN847257.1"/>
</dbReference>
<dbReference type="STRING" id="406984.CPK_ORF00687"/>
<dbReference type="GeneID" id="63510144"/>
<dbReference type="KEGG" id="cpa:CP_0588"/>
<dbReference type="KEGG" id="cpj:CPj0180"/>
<dbReference type="KEGG" id="cpn:CPn_0180"/>
<dbReference type="KEGG" id="cpt:CpB0183"/>
<dbReference type="PATRIC" id="fig|115713.3.peg.205"/>
<dbReference type="HOGENOM" id="CLU_1465742_0_0_0"/>
<dbReference type="Proteomes" id="UP000000583">
    <property type="component" value="Chromosome"/>
</dbReference>
<dbReference type="Proteomes" id="UP000000801">
    <property type="component" value="Chromosome"/>
</dbReference>
<accession>Q9Z904</accession>
<accession>Q9JSI6</accession>
<accession>Q9K240</accession>
<proteinExistence type="predicted"/>
<evidence type="ECO:0000305" key="1"/>
<name>Y180_CHLPN</name>
<reference key="1">
    <citation type="journal article" date="1999" name="Nat. Genet.">
        <title>Comparative genomes of Chlamydia pneumoniae and C. trachomatis.</title>
        <authorList>
            <person name="Kalman S."/>
            <person name="Mitchell W.P."/>
            <person name="Marathe R."/>
            <person name="Lammel C.J."/>
            <person name="Fan J."/>
            <person name="Hyman R.W."/>
            <person name="Olinger L."/>
            <person name="Grimwood J."/>
            <person name="Davis R.W."/>
            <person name="Stephens R.S."/>
        </authorList>
    </citation>
    <scope>NUCLEOTIDE SEQUENCE [LARGE SCALE GENOMIC DNA]</scope>
    <source>
        <strain>CWL029</strain>
    </source>
</reference>
<reference key="2">
    <citation type="journal article" date="2000" name="Nucleic Acids Res.">
        <title>Genome sequences of Chlamydia trachomatis MoPn and Chlamydia pneumoniae AR39.</title>
        <authorList>
            <person name="Read T.D."/>
            <person name="Brunham R.C."/>
            <person name="Shen C."/>
            <person name="Gill S.R."/>
            <person name="Heidelberg J.F."/>
            <person name="White O."/>
            <person name="Hickey E.K."/>
            <person name="Peterson J.D."/>
            <person name="Utterback T.R."/>
            <person name="Berry K.J."/>
            <person name="Bass S."/>
            <person name="Linher K.D."/>
            <person name="Weidman J.F."/>
            <person name="Khouri H.M."/>
            <person name="Craven B."/>
            <person name="Bowman C."/>
            <person name="Dodson R.J."/>
            <person name="Gwinn M.L."/>
            <person name="Nelson W.C."/>
            <person name="DeBoy R.T."/>
            <person name="Kolonay J.F."/>
            <person name="McClarty G."/>
            <person name="Salzberg S.L."/>
            <person name="Eisen J.A."/>
            <person name="Fraser C.M."/>
        </authorList>
    </citation>
    <scope>NUCLEOTIDE SEQUENCE [LARGE SCALE GENOMIC DNA]</scope>
    <source>
        <strain>AR39</strain>
    </source>
</reference>
<reference key="3">
    <citation type="journal article" date="2000" name="Nucleic Acids Res.">
        <title>Comparison of whole genome sequences of Chlamydia pneumoniae J138 from Japan and CWL029 from USA.</title>
        <authorList>
            <person name="Shirai M."/>
            <person name="Hirakawa H."/>
            <person name="Kimoto M."/>
            <person name="Tabuchi M."/>
            <person name="Kishi F."/>
            <person name="Ouchi K."/>
            <person name="Shiba T."/>
            <person name="Ishii K."/>
            <person name="Hattori M."/>
            <person name="Kuhara S."/>
            <person name="Nakazawa T."/>
        </authorList>
    </citation>
    <scope>NUCLEOTIDE SEQUENCE [LARGE SCALE GENOMIC DNA]</scope>
    <source>
        <strain>J138</strain>
    </source>
</reference>
<reference key="4">
    <citation type="submission" date="2002-05" db="EMBL/GenBank/DDBJ databases">
        <title>The genome sequence of Chlamydia pneumoniae TW183 and comparison with other Chlamydia strains based on whole genome sequence analysis.</title>
        <authorList>
            <person name="Geng M.M."/>
            <person name="Schuhmacher A."/>
            <person name="Muehldorfer I."/>
            <person name="Bensch K.W."/>
            <person name="Schaefer K.P."/>
            <person name="Schneider S."/>
            <person name="Pohl T."/>
            <person name="Essig A."/>
            <person name="Marre R."/>
            <person name="Melchers K."/>
        </authorList>
    </citation>
    <scope>NUCLEOTIDE SEQUENCE [LARGE SCALE GENOMIC DNA]</scope>
    <source>
        <strain>TW-183</strain>
    </source>
</reference>
<organism>
    <name type="scientific">Chlamydia pneumoniae</name>
    <name type="common">Chlamydophila pneumoniae</name>
    <dbReference type="NCBI Taxonomy" id="83558"/>
    <lineage>
        <taxon>Bacteria</taxon>
        <taxon>Pseudomonadati</taxon>
        <taxon>Chlamydiota</taxon>
        <taxon>Chlamydiia</taxon>
        <taxon>Chlamydiales</taxon>
        <taxon>Chlamydiaceae</taxon>
        <taxon>Chlamydia/Chlamydophila group</taxon>
        <taxon>Chlamydia</taxon>
    </lineage>
</organism>
<feature type="chain" id="PRO_0000218367" description="Uncharacterized protein CPn_0180/CP_0588/CPj0180/CpB0183">
    <location>
        <begin position="1"/>
        <end position="184"/>
    </location>
</feature>
<feature type="sequence conflict" description="In Ref. 3; BAA98390." evidence="1" ref="3">
    <original>V</original>
    <variation>A</variation>
    <location>
        <position position="173"/>
    </location>
</feature>